<gene>
    <name type="ordered locus">LVIS_1359</name>
</gene>
<feature type="chain" id="PRO_1000137012" description="UPF0291 protein LVIS_1359">
    <location>
        <begin position="1"/>
        <end position="82"/>
    </location>
</feature>
<organism>
    <name type="scientific">Levilactobacillus brevis (strain ATCC 367 / BCRC 12310 / CIP 105137 / JCM 1170 / LMG 11437 / NCIMB 947 / NCTC 947)</name>
    <name type="common">Lactobacillus brevis</name>
    <dbReference type="NCBI Taxonomy" id="387344"/>
    <lineage>
        <taxon>Bacteria</taxon>
        <taxon>Bacillati</taxon>
        <taxon>Bacillota</taxon>
        <taxon>Bacilli</taxon>
        <taxon>Lactobacillales</taxon>
        <taxon>Lactobacillaceae</taxon>
        <taxon>Levilactobacillus</taxon>
    </lineage>
</organism>
<dbReference type="EMBL" id="CP000416">
    <property type="protein sequence ID" value="ABJ64459.1"/>
    <property type="molecule type" value="Genomic_DNA"/>
</dbReference>
<dbReference type="RefSeq" id="WP_011668032.1">
    <property type="nucleotide sequence ID" value="NC_008497.1"/>
</dbReference>
<dbReference type="SMR" id="Q03QR3"/>
<dbReference type="STRING" id="387344.LVIS_1359"/>
<dbReference type="KEGG" id="lbr:LVIS_1359"/>
<dbReference type="eggNOG" id="COG4224">
    <property type="taxonomic scope" value="Bacteria"/>
</dbReference>
<dbReference type="HOGENOM" id="CLU_173137_0_1_9"/>
<dbReference type="Proteomes" id="UP000001652">
    <property type="component" value="Chromosome"/>
</dbReference>
<dbReference type="GO" id="GO:0005737">
    <property type="term" value="C:cytoplasm"/>
    <property type="evidence" value="ECO:0007669"/>
    <property type="project" value="UniProtKB-SubCell"/>
</dbReference>
<dbReference type="Gene3D" id="1.10.287.540">
    <property type="entry name" value="Helix hairpin bin"/>
    <property type="match status" value="1"/>
</dbReference>
<dbReference type="HAMAP" id="MF_01103">
    <property type="entry name" value="UPF0291"/>
    <property type="match status" value="1"/>
</dbReference>
<dbReference type="InterPro" id="IPR009242">
    <property type="entry name" value="DUF896"/>
</dbReference>
<dbReference type="PANTHER" id="PTHR37300">
    <property type="entry name" value="UPF0291 PROTEIN CBO2609/CLC_2481"/>
    <property type="match status" value="1"/>
</dbReference>
<dbReference type="PANTHER" id="PTHR37300:SF1">
    <property type="entry name" value="UPF0291 PROTEIN YNZC"/>
    <property type="match status" value="1"/>
</dbReference>
<dbReference type="Pfam" id="PF05979">
    <property type="entry name" value="DUF896"/>
    <property type="match status" value="1"/>
</dbReference>
<dbReference type="SUPFAM" id="SSF158221">
    <property type="entry name" value="YnzC-like"/>
    <property type="match status" value="1"/>
</dbReference>
<comment type="subcellular location">
    <subcellularLocation>
        <location evidence="1">Cytoplasm</location>
    </subcellularLocation>
</comment>
<comment type="similarity">
    <text evidence="1">Belongs to the UPF0291 family.</text>
</comment>
<reference key="1">
    <citation type="journal article" date="2006" name="Proc. Natl. Acad. Sci. U.S.A.">
        <title>Comparative genomics of the lactic acid bacteria.</title>
        <authorList>
            <person name="Makarova K.S."/>
            <person name="Slesarev A."/>
            <person name="Wolf Y.I."/>
            <person name="Sorokin A."/>
            <person name="Mirkin B."/>
            <person name="Koonin E.V."/>
            <person name="Pavlov A."/>
            <person name="Pavlova N."/>
            <person name="Karamychev V."/>
            <person name="Polouchine N."/>
            <person name="Shakhova V."/>
            <person name="Grigoriev I."/>
            <person name="Lou Y."/>
            <person name="Rohksar D."/>
            <person name="Lucas S."/>
            <person name="Huang K."/>
            <person name="Goodstein D.M."/>
            <person name="Hawkins T."/>
            <person name="Plengvidhya V."/>
            <person name="Welker D."/>
            <person name="Hughes J."/>
            <person name="Goh Y."/>
            <person name="Benson A."/>
            <person name="Baldwin K."/>
            <person name="Lee J.-H."/>
            <person name="Diaz-Muniz I."/>
            <person name="Dosti B."/>
            <person name="Smeianov V."/>
            <person name="Wechter W."/>
            <person name="Barabote R."/>
            <person name="Lorca G."/>
            <person name="Altermann E."/>
            <person name="Barrangou R."/>
            <person name="Ganesan B."/>
            <person name="Xie Y."/>
            <person name="Rawsthorne H."/>
            <person name="Tamir D."/>
            <person name="Parker C."/>
            <person name="Breidt F."/>
            <person name="Broadbent J.R."/>
            <person name="Hutkins R."/>
            <person name="O'Sullivan D."/>
            <person name="Steele J."/>
            <person name="Unlu G."/>
            <person name="Saier M.H. Jr."/>
            <person name="Klaenhammer T."/>
            <person name="Richardson P."/>
            <person name="Kozyavkin S."/>
            <person name="Weimer B.C."/>
            <person name="Mills D.A."/>
        </authorList>
    </citation>
    <scope>NUCLEOTIDE SEQUENCE [LARGE SCALE GENOMIC DNA]</scope>
    <source>
        <strain>ATCC 367 / BCRC 12310 / CIP 105137 / JCM 1170 / LMG 11437 / NCIMB 947 / NCTC 947</strain>
    </source>
</reference>
<protein>
    <recommendedName>
        <fullName evidence="1">UPF0291 protein LVIS_1359</fullName>
    </recommendedName>
</protein>
<sequence length="82" mass="9680">MAEPTMDSLLARINELAHKNKTDGLTDEETAERDHLRKQYLKLFRESFRSQVEMMQVYDKAGKEVTPEKVRQIQRDKGLRDD</sequence>
<keyword id="KW-0963">Cytoplasm</keyword>
<keyword id="KW-1185">Reference proteome</keyword>
<name>Y1359_LEVBA</name>
<accession>Q03QR3</accession>
<evidence type="ECO:0000255" key="1">
    <source>
        <dbReference type="HAMAP-Rule" id="MF_01103"/>
    </source>
</evidence>
<proteinExistence type="inferred from homology"/>